<dbReference type="EMBL" id="AP008934">
    <property type="protein sequence ID" value="BAE18657.1"/>
    <property type="molecule type" value="Genomic_DNA"/>
</dbReference>
<dbReference type="RefSeq" id="WP_002483467.1">
    <property type="nucleotide sequence ID" value="NZ_MTGA01000034.1"/>
</dbReference>
<dbReference type="SMR" id="Q49X41"/>
<dbReference type="GeneID" id="66867724"/>
<dbReference type="KEGG" id="ssp:SSP1512"/>
<dbReference type="eggNOG" id="COG0052">
    <property type="taxonomic scope" value="Bacteria"/>
</dbReference>
<dbReference type="HOGENOM" id="CLU_040318_1_2_9"/>
<dbReference type="OrthoDB" id="9808036at2"/>
<dbReference type="Proteomes" id="UP000006371">
    <property type="component" value="Chromosome"/>
</dbReference>
<dbReference type="GO" id="GO:0022627">
    <property type="term" value="C:cytosolic small ribosomal subunit"/>
    <property type="evidence" value="ECO:0007669"/>
    <property type="project" value="TreeGrafter"/>
</dbReference>
<dbReference type="GO" id="GO:0003735">
    <property type="term" value="F:structural constituent of ribosome"/>
    <property type="evidence" value="ECO:0007669"/>
    <property type="project" value="InterPro"/>
</dbReference>
<dbReference type="GO" id="GO:0006412">
    <property type="term" value="P:translation"/>
    <property type="evidence" value="ECO:0007669"/>
    <property type="project" value="UniProtKB-UniRule"/>
</dbReference>
<dbReference type="CDD" id="cd01425">
    <property type="entry name" value="RPS2"/>
    <property type="match status" value="1"/>
</dbReference>
<dbReference type="FunFam" id="1.10.287.610:FF:000001">
    <property type="entry name" value="30S ribosomal protein S2"/>
    <property type="match status" value="1"/>
</dbReference>
<dbReference type="Gene3D" id="3.40.50.10490">
    <property type="entry name" value="Glucose-6-phosphate isomerase like protein, domain 1"/>
    <property type="match status" value="1"/>
</dbReference>
<dbReference type="Gene3D" id="1.10.287.610">
    <property type="entry name" value="Helix hairpin bin"/>
    <property type="match status" value="1"/>
</dbReference>
<dbReference type="HAMAP" id="MF_00291_B">
    <property type="entry name" value="Ribosomal_uS2_B"/>
    <property type="match status" value="1"/>
</dbReference>
<dbReference type="InterPro" id="IPR001865">
    <property type="entry name" value="Ribosomal_uS2"/>
</dbReference>
<dbReference type="InterPro" id="IPR005706">
    <property type="entry name" value="Ribosomal_uS2_bac/mit/plastid"/>
</dbReference>
<dbReference type="InterPro" id="IPR018130">
    <property type="entry name" value="Ribosomal_uS2_CS"/>
</dbReference>
<dbReference type="InterPro" id="IPR023591">
    <property type="entry name" value="Ribosomal_uS2_flav_dom_sf"/>
</dbReference>
<dbReference type="NCBIfam" id="TIGR01011">
    <property type="entry name" value="rpsB_bact"/>
    <property type="match status" value="1"/>
</dbReference>
<dbReference type="PANTHER" id="PTHR12534">
    <property type="entry name" value="30S RIBOSOMAL PROTEIN S2 PROKARYOTIC AND ORGANELLAR"/>
    <property type="match status" value="1"/>
</dbReference>
<dbReference type="PANTHER" id="PTHR12534:SF0">
    <property type="entry name" value="SMALL RIBOSOMAL SUBUNIT PROTEIN US2M"/>
    <property type="match status" value="1"/>
</dbReference>
<dbReference type="Pfam" id="PF00318">
    <property type="entry name" value="Ribosomal_S2"/>
    <property type="match status" value="1"/>
</dbReference>
<dbReference type="PRINTS" id="PR00395">
    <property type="entry name" value="RIBOSOMALS2"/>
</dbReference>
<dbReference type="SUPFAM" id="SSF52313">
    <property type="entry name" value="Ribosomal protein S2"/>
    <property type="match status" value="1"/>
</dbReference>
<dbReference type="PROSITE" id="PS00962">
    <property type="entry name" value="RIBOSOMAL_S2_1"/>
    <property type="match status" value="1"/>
</dbReference>
<dbReference type="PROSITE" id="PS00963">
    <property type="entry name" value="RIBOSOMAL_S2_2"/>
    <property type="match status" value="1"/>
</dbReference>
<protein>
    <recommendedName>
        <fullName evidence="1">Small ribosomal subunit protein uS2</fullName>
    </recommendedName>
    <alternativeName>
        <fullName evidence="3">30S ribosomal protein S2</fullName>
    </alternativeName>
</protein>
<reference key="1">
    <citation type="journal article" date="2005" name="Proc. Natl. Acad. Sci. U.S.A.">
        <title>Whole genome sequence of Staphylococcus saprophyticus reveals the pathogenesis of uncomplicated urinary tract infection.</title>
        <authorList>
            <person name="Kuroda M."/>
            <person name="Yamashita A."/>
            <person name="Hirakawa H."/>
            <person name="Kumano M."/>
            <person name="Morikawa K."/>
            <person name="Higashide M."/>
            <person name="Maruyama A."/>
            <person name="Inose Y."/>
            <person name="Matoba K."/>
            <person name="Toh H."/>
            <person name="Kuhara S."/>
            <person name="Hattori M."/>
            <person name="Ohta T."/>
        </authorList>
    </citation>
    <scope>NUCLEOTIDE SEQUENCE [LARGE SCALE GENOMIC DNA]</scope>
    <source>
        <strain>ATCC 15305 / DSM 20229 / NCIMB 8711 / NCTC 7292 / S-41</strain>
    </source>
</reference>
<name>RS2_STAS1</name>
<accession>Q49X41</accession>
<keyword id="KW-1185">Reference proteome</keyword>
<keyword id="KW-0687">Ribonucleoprotein</keyword>
<keyword id="KW-0689">Ribosomal protein</keyword>
<evidence type="ECO:0000255" key="1">
    <source>
        <dbReference type="HAMAP-Rule" id="MF_00291"/>
    </source>
</evidence>
<evidence type="ECO:0000256" key="2">
    <source>
        <dbReference type="SAM" id="MobiDB-lite"/>
    </source>
</evidence>
<evidence type="ECO:0000305" key="3"/>
<gene>
    <name evidence="1" type="primary">rpsB</name>
    <name type="ordered locus">SSP1512</name>
</gene>
<comment type="similarity">
    <text evidence="1">Belongs to the universal ribosomal protein uS2 family.</text>
</comment>
<feature type="chain" id="PRO_1000004084" description="Small ribosomal subunit protein uS2">
    <location>
        <begin position="1"/>
        <end position="262"/>
    </location>
</feature>
<feature type="region of interest" description="Disordered" evidence="2">
    <location>
        <begin position="228"/>
        <end position="262"/>
    </location>
</feature>
<organism>
    <name type="scientific">Staphylococcus saprophyticus subsp. saprophyticus (strain ATCC 15305 / DSM 20229 / NCIMB 8711 / NCTC 7292 / S-41)</name>
    <dbReference type="NCBI Taxonomy" id="342451"/>
    <lineage>
        <taxon>Bacteria</taxon>
        <taxon>Bacillati</taxon>
        <taxon>Bacillota</taxon>
        <taxon>Bacilli</taxon>
        <taxon>Bacillales</taxon>
        <taxon>Staphylococcaceae</taxon>
        <taxon>Staphylococcus</taxon>
    </lineage>
</organism>
<sequence length="262" mass="29748">MAVISMKQLLEAGVHFGHQTRRWNPKMKRYIFTERNGIYIIDLQKTVKKVEEAYNFIKQVSEDGGKVLFVGTKKQAQDSVKAEAERAGQFYVNQRWLGGILTNYKTISKRIKRISEIEKMEEDGLFEVLPKKEVVELKKEYDRLIKFLGGIRDMKSMPQALFVVDPRKERNAIAEARKLHIPIVGIVDTNCDPDEIDYVIPANDDAIRAVKLLTGKMADAILEGQQGVSNEEVAAEQNIDLDESKEATEAETTEENTSVESN</sequence>
<proteinExistence type="inferred from homology"/>